<comment type="function">
    <text evidence="1">One of the primary rRNA binding proteins, it binds directly near the 3'-end of the 23S rRNA, where it nucleates assembly of the 50S subunit.</text>
</comment>
<comment type="subunit">
    <text>Part of the 50S ribosomal subunit.</text>
</comment>
<comment type="subcellular location">
    <subcellularLocation>
        <location>Plastid</location>
        <location>Chloroplast</location>
    </subcellularLocation>
</comment>
<comment type="similarity">
    <text evidence="3">Belongs to the universal ribosomal protein uL3 family.</text>
</comment>
<keyword id="KW-0150">Chloroplast</keyword>
<keyword id="KW-0934">Plastid</keyword>
<keyword id="KW-0687">Ribonucleoprotein</keyword>
<keyword id="KW-0689">Ribosomal protein</keyword>
<keyword id="KW-0694">RNA-binding</keyword>
<keyword id="KW-0699">rRNA-binding</keyword>
<organism>
    <name type="scientific">Emiliania huxleyi</name>
    <name type="common">Coccolithophore</name>
    <name type="synonym">Pontosphaera huxleyi</name>
    <dbReference type="NCBI Taxonomy" id="2903"/>
    <lineage>
        <taxon>Eukaryota</taxon>
        <taxon>Haptista</taxon>
        <taxon>Haptophyta</taxon>
        <taxon>Prymnesiophyceae</taxon>
        <taxon>Isochrysidales</taxon>
        <taxon>Noelaerhabdaceae</taxon>
        <taxon>Emiliania</taxon>
    </lineage>
</organism>
<evidence type="ECO:0000250" key="1"/>
<evidence type="ECO:0000256" key="2">
    <source>
        <dbReference type="SAM" id="MobiDB-lite"/>
    </source>
</evidence>
<evidence type="ECO:0000305" key="3"/>
<name>RK3_EMIHU</name>
<protein>
    <recommendedName>
        <fullName evidence="3">Large ribosomal subunit protein uL3c</fullName>
    </recommendedName>
    <alternativeName>
        <fullName>50S ribosomal protein L3, chloroplastic</fullName>
    </alternativeName>
</protein>
<accession>Q4G364</accession>
<feature type="chain" id="PRO_0000241437" description="Large ribosomal subunit protein uL3c">
    <location>
        <begin position="1"/>
        <end position="207"/>
    </location>
</feature>
<feature type="region of interest" description="Disordered" evidence="2">
    <location>
        <begin position="115"/>
        <end position="151"/>
    </location>
</feature>
<sequence length="207" mass="22296">MTAGIFGRKIGMTQIFDKDGSAIPVTLVKADPCQVCQIKTTKTDGYDAIQVGYLEEKLSKISKPIQGHLQKCGSTGYRKFGEFRVEDPETYNLGDQITTSAFSVGQKVRVTGTSIGKGFAGNQKRHNFSRGPMTHGSKNHRLPGSIGAGSTPGRVYPGKKMAGHLGNTKTTIKNSEILFVSEKENILILKGSLPGKAKNILRIAAKV</sequence>
<proteinExistence type="inferred from homology"/>
<reference key="1">
    <citation type="journal article" date="2006" name="J. Mol. Evol.">
        <title>Rate variation as a function of gene origin in plastid-derived genes of peridinin-containing dinoflagellates.</title>
        <authorList>
            <person name="Bachvaroff T.R."/>
            <person name="Sanchez-Puerta M.V."/>
            <person name="Delwiche C.F."/>
        </authorList>
    </citation>
    <scope>NUCLEOTIDE SEQUENCE [GENOMIC DNA]</scope>
    <source>
        <strain>CCMP373 / CSIRO-CS-57 / BT6</strain>
    </source>
</reference>
<reference key="2">
    <citation type="journal article" date="2005" name="DNA Res.">
        <title>The complete plastid genome sequence of the haptophyte Emiliania huxleyi: a comparison to other plastid genomes.</title>
        <authorList>
            <person name="Sanchez-Puerta M.V."/>
            <person name="Bachvaroff T.R."/>
            <person name="Delwiche C.F."/>
        </authorList>
    </citation>
    <scope>NUCLEOTIDE SEQUENCE [LARGE SCALE GENOMIC DNA]</scope>
    <source>
        <strain>CCMP373 / CSIRO-CS-57 / BT6</strain>
    </source>
</reference>
<geneLocation type="chloroplast"/>
<dbReference type="EMBL" id="AY704569">
    <property type="protein sequence ID" value="AAU81908.1"/>
    <property type="molecule type" value="Genomic_DNA"/>
</dbReference>
<dbReference type="EMBL" id="AY741371">
    <property type="protein sequence ID" value="AAX13902.1"/>
    <property type="molecule type" value="Genomic_DNA"/>
</dbReference>
<dbReference type="RefSeq" id="YP_277403.1">
    <property type="nucleotide sequence ID" value="NC_007288.1"/>
</dbReference>
<dbReference type="SMR" id="Q4G364"/>
<dbReference type="STRING" id="2903.Q4G364"/>
<dbReference type="GeneID" id="3562487"/>
<dbReference type="GO" id="GO:0009507">
    <property type="term" value="C:chloroplast"/>
    <property type="evidence" value="ECO:0007669"/>
    <property type="project" value="UniProtKB-SubCell"/>
</dbReference>
<dbReference type="GO" id="GO:0022625">
    <property type="term" value="C:cytosolic large ribosomal subunit"/>
    <property type="evidence" value="ECO:0007669"/>
    <property type="project" value="TreeGrafter"/>
</dbReference>
<dbReference type="GO" id="GO:0019843">
    <property type="term" value="F:rRNA binding"/>
    <property type="evidence" value="ECO:0007669"/>
    <property type="project" value="UniProtKB-UniRule"/>
</dbReference>
<dbReference type="GO" id="GO:0003735">
    <property type="term" value="F:structural constituent of ribosome"/>
    <property type="evidence" value="ECO:0007669"/>
    <property type="project" value="InterPro"/>
</dbReference>
<dbReference type="GO" id="GO:0006412">
    <property type="term" value="P:translation"/>
    <property type="evidence" value="ECO:0007669"/>
    <property type="project" value="UniProtKB-UniRule"/>
</dbReference>
<dbReference type="FunFam" id="3.30.160.810:FF:000001">
    <property type="entry name" value="50S ribosomal protein L3"/>
    <property type="match status" value="1"/>
</dbReference>
<dbReference type="FunFam" id="2.40.30.10:FF:000065">
    <property type="entry name" value="50S ribosomal protein L3, chloroplastic"/>
    <property type="match status" value="1"/>
</dbReference>
<dbReference type="Gene3D" id="3.30.160.810">
    <property type="match status" value="1"/>
</dbReference>
<dbReference type="Gene3D" id="2.40.30.10">
    <property type="entry name" value="Translation factors"/>
    <property type="match status" value="1"/>
</dbReference>
<dbReference type="HAMAP" id="MF_01325_B">
    <property type="entry name" value="Ribosomal_uL3_B"/>
    <property type="match status" value="1"/>
</dbReference>
<dbReference type="InterPro" id="IPR000597">
    <property type="entry name" value="Ribosomal_uL3"/>
</dbReference>
<dbReference type="InterPro" id="IPR019927">
    <property type="entry name" value="Ribosomal_uL3_bac/org-type"/>
</dbReference>
<dbReference type="InterPro" id="IPR009000">
    <property type="entry name" value="Transl_B-barrel_sf"/>
</dbReference>
<dbReference type="NCBIfam" id="TIGR03625">
    <property type="entry name" value="L3_bact"/>
    <property type="match status" value="1"/>
</dbReference>
<dbReference type="PANTHER" id="PTHR11229">
    <property type="entry name" value="50S RIBOSOMAL PROTEIN L3"/>
    <property type="match status" value="1"/>
</dbReference>
<dbReference type="PANTHER" id="PTHR11229:SF16">
    <property type="entry name" value="LARGE RIBOSOMAL SUBUNIT PROTEIN UL3C"/>
    <property type="match status" value="1"/>
</dbReference>
<dbReference type="Pfam" id="PF00297">
    <property type="entry name" value="Ribosomal_L3"/>
    <property type="match status" value="1"/>
</dbReference>
<dbReference type="SUPFAM" id="SSF50447">
    <property type="entry name" value="Translation proteins"/>
    <property type="match status" value="1"/>
</dbReference>
<gene>
    <name type="primary">rpl3</name>
</gene>